<sequence>MKAKELRELTDAELNKKLSDSKEELFKLRFQLATGQLDNPMKLQEVRRRIARVKTIIRERELGIRRA</sequence>
<proteinExistence type="inferred from homology"/>
<name>RL29_PELTS</name>
<keyword id="KW-1185">Reference proteome</keyword>
<keyword id="KW-0687">Ribonucleoprotein</keyword>
<keyword id="KW-0689">Ribosomal protein</keyword>
<feature type="chain" id="PRO_1000079895" description="Large ribosomal subunit protein uL29">
    <location>
        <begin position="1"/>
        <end position="67"/>
    </location>
</feature>
<organism>
    <name type="scientific">Pelotomaculum thermopropionicum (strain DSM 13744 / JCM 10971 / SI)</name>
    <dbReference type="NCBI Taxonomy" id="370438"/>
    <lineage>
        <taxon>Bacteria</taxon>
        <taxon>Bacillati</taxon>
        <taxon>Bacillota</taxon>
        <taxon>Clostridia</taxon>
        <taxon>Eubacteriales</taxon>
        <taxon>Desulfotomaculaceae</taxon>
        <taxon>Pelotomaculum</taxon>
    </lineage>
</organism>
<protein>
    <recommendedName>
        <fullName evidence="1">Large ribosomal subunit protein uL29</fullName>
    </recommendedName>
    <alternativeName>
        <fullName evidence="2">50S ribosomal protein L29</fullName>
    </alternativeName>
</protein>
<dbReference type="EMBL" id="AP009389">
    <property type="protein sequence ID" value="BAF58509.1"/>
    <property type="molecule type" value="Genomic_DNA"/>
</dbReference>
<dbReference type="SMR" id="A5D5G3"/>
<dbReference type="STRING" id="370438.PTH_0328"/>
<dbReference type="KEGG" id="pth:PTH_0328"/>
<dbReference type="eggNOG" id="COG0255">
    <property type="taxonomic scope" value="Bacteria"/>
</dbReference>
<dbReference type="HOGENOM" id="CLU_158491_5_2_9"/>
<dbReference type="Proteomes" id="UP000006556">
    <property type="component" value="Chromosome"/>
</dbReference>
<dbReference type="GO" id="GO:0022625">
    <property type="term" value="C:cytosolic large ribosomal subunit"/>
    <property type="evidence" value="ECO:0007669"/>
    <property type="project" value="TreeGrafter"/>
</dbReference>
<dbReference type="GO" id="GO:0003735">
    <property type="term" value="F:structural constituent of ribosome"/>
    <property type="evidence" value="ECO:0007669"/>
    <property type="project" value="InterPro"/>
</dbReference>
<dbReference type="GO" id="GO:0006412">
    <property type="term" value="P:translation"/>
    <property type="evidence" value="ECO:0007669"/>
    <property type="project" value="UniProtKB-UniRule"/>
</dbReference>
<dbReference type="CDD" id="cd00427">
    <property type="entry name" value="Ribosomal_L29_HIP"/>
    <property type="match status" value="1"/>
</dbReference>
<dbReference type="FunFam" id="1.10.287.310:FF:000001">
    <property type="entry name" value="50S ribosomal protein L29"/>
    <property type="match status" value="1"/>
</dbReference>
<dbReference type="Gene3D" id="1.10.287.310">
    <property type="match status" value="1"/>
</dbReference>
<dbReference type="HAMAP" id="MF_00374">
    <property type="entry name" value="Ribosomal_uL29"/>
    <property type="match status" value="1"/>
</dbReference>
<dbReference type="InterPro" id="IPR050063">
    <property type="entry name" value="Ribosomal_protein_uL29"/>
</dbReference>
<dbReference type="InterPro" id="IPR001854">
    <property type="entry name" value="Ribosomal_uL29"/>
</dbReference>
<dbReference type="InterPro" id="IPR036049">
    <property type="entry name" value="Ribosomal_uL29_sf"/>
</dbReference>
<dbReference type="NCBIfam" id="TIGR00012">
    <property type="entry name" value="L29"/>
    <property type="match status" value="1"/>
</dbReference>
<dbReference type="PANTHER" id="PTHR10916">
    <property type="entry name" value="60S RIBOSOMAL PROTEIN L35/50S RIBOSOMAL PROTEIN L29"/>
    <property type="match status" value="1"/>
</dbReference>
<dbReference type="PANTHER" id="PTHR10916:SF0">
    <property type="entry name" value="LARGE RIBOSOMAL SUBUNIT PROTEIN UL29C"/>
    <property type="match status" value="1"/>
</dbReference>
<dbReference type="Pfam" id="PF00831">
    <property type="entry name" value="Ribosomal_L29"/>
    <property type="match status" value="1"/>
</dbReference>
<dbReference type="SUPFAM" id="SSF46561">
    <property type="entry name" value="Ribosomal protein L29 (L29p)"/>
    <property type="match status" value="1"/>
</dbReference>
<evidence type="ECO:0000255" key="1">
    <source>
        <dbReference type="HAMAP-Rule" id="MF_00374"/>
    </source>
</evidence>
<evidence type="ECO:0000305" key="2"/>
<comment type="similarity">
    <text evidence="1">Belongs to the universal ribosomal protein uL29 family.</text>
</comment>
<accession>A5D5G3</accession>
<gene>
    <name evidence="1" type="primary">rpmC</name>
    <name type="ordered locus">PTH_0328</name>
</gene>
<reference key="1">
    <citation type="journal article" date="2008" name="Genome Res.">
        <title>The genome of Pelotomaculum thermopropionicum reveals niche-associated evolution in anaerobic microbiota.</title>
        <authorList>
            <person name="Kosaka T."/>
            <person name="Kato S."/>
            <person name="Shimoyama T."/>
            <person name="Ishii S."/>
            <person name="Abe T."/>
            <person name="Watanabe K."/>
        </authorList>
    </citation>
    <scope>NUCLEOTIDE SEQUENCE [LARGE SCALE GENOMIC DNA]</scope>
    <source>
        <strain>DSM 13744 / JCM 10971 / SI</strain>
    </source>
</reference>